<keyword id="KW-1003">Cell membrane</keyword>
<keyword id="KW-0963">Cytoplasm</keyword>
<keyword id="KW-0344">Guanine-nucleotide releasing factor</keyword>
<keyword id="KW-0472">Membrane</keyword>
<keyword id="KW-0539">Nucleus</keyword>
<keyword id="KW-0653">Protein transport</keyword>
<keyword id="KW-1185">Reference proteome</keyword>
<keyword id="KW-0813">Transport</keyword>
<dbReference type="EMBL" id="BX276102">
    <property type="status" value="NOT_ANNOTATED_CDS"/>
    <property type="molecule type" value="Genomic_DNA"/>
</dbReference>
<dbReference type="EMBL" id="CR749165">
    <property type="status" value="NOT_ANNOTATED_CDS"/>
    <property type="molecule type" value="Genomic_DNA"/>
</dbReference>
<dbReference type="EMBL" id="BC150378">
    <property type="protein sequence ID" value="AAI50379.1"/>
    <property type="molecule type" value="mRNA"/>
</dbReference>
<dbReference type="RefSeq" id="NP_001093465.1">
    <property type="nucleotide sequence ID" value="NM_001099995.1"/>
</dbReference>
<dbReference type="RefSeq" id="XP_005165551.1">
    <property type="nucleotide sequence ID" value="XM_005165494.5"/>
</dbReference>
<dbReference type="RefSeq" id="XP_005165552.1">
    <property type="nucleotide sequence ID" value="XM_005165495.3"/>
</dbReference>
<dbReference type="RefSeq" id="XP_009300097.1">
    <property type="nucleotide sequence ID" value="XM_009301822.2"/>
</dbReference>
<dbReference type="SMR" id="A3KPP3"/>
<dbReference type="FunCoup" id="A3KPP3">
    <property type="interactions" value="326"/>
</dbReference>
<dbReference type="STRING" id="7955.ENSDARP00000137644"/>
<dbReference type="PaxDb" id="7955-ENSDARP00000105301"/>
<dbReference type="Ensembl" id="ENSDART00000166050">
    <property type="protein sequence ID" value="ENSDARP00000137010"/>
    <property type="gene ID" value="ENSDARG00000098786"/>
</dbReference>
<dbReference type="Ensembl" id="ENSDART00000170218">
    <property type="protein sequence ID" value="ENSDARP00000137644"/>
    <property type="gene ID" value="ENSDARG00000098786"/>
</dbReference>
<dbReference type="GeneID" id="559102"/>
<dbReference type="KEGG" id="dre:559102"/>
<dbReference type="AGR" id="ZFIN:ZDB-GENE-060526-143"/>
<dbReference type="CTD" id="29098"/>
<dbReference type="ZFIN" id="ZDB-GENE-060526-143">
    <property type="gene designation" value="rangrf"/>
</dbReference>
<dbReference type="eggNOG" id="KOG3329">
    <property type="taxonomic scope" value="Eukaryota"/>
</dbReference>
<dbReference type="HOGENOM" id="CLU_081345_2_1_1"/>
<dbReference type="InParanoid" id="A3KPP3"/>
<dbReference type="OMA" id="ECSSAWM"/>
<dbReference type="OrthoDB" id="10255285at2759"/>
<dbReference type="PhylomeDB" id="A3KPP3"/>
<dbReference type="TreeFam" id="TF332074"/>
<dbReference type="PRO" id="PR:A3KPP3"/>
<dbReference type="Proteomes" id="UP000000437">
    <property type="component" value="Chromosome 5"/>
</dbReference>
<dbReference type="Bgee" id="ENSDARG00000098786">
    <property type="expression patterns" value="Expressed in early embryo and 30 other cell types or tissues"/>
</dbReference>
<dbReference type="GO" id="GO:0005634">
    <property type="term" value="C:nucleus"/>
    <property type="evidence" value="ECO:0000318"/>
    <property type="project" value="GO_Central"/>
</dbReference>
<dbReference type="GO" id="GO:0048471">
    <property type="term" value="C:perinuclear region of cytoplasm"/>
    <property type="evidence" value="ECO:0007669"/>
    <property type="project" value="UniProtKB-SubCell"/>
</dbReference>
<dbReference type="GO" id="GO:0005886">
    <property type="term" value="C:plasma membrane"/>
    <property type="evidence" value="ECO:0007669"/>
    <property type="project" value="UniProtKB-SubCell"/>
</dbReference>
<dbReference type="GO" id="GO:0005085">
    <property type="term" value="F:guanyl-nucleotide exchange factor activity"/>
    <property type="evidence" value="ECO:0000318"/>
    <property type="project" value="GO_Central"/>
</dbReference>
<dbReference type="GO" id="GO:0031267">
    <property type="term" value="F:small GTPase binding"/>
    <property type="evidence" value="ECO:0000318"/>
    <property type="project" value="GO_Central"/>
</dbReference>
<dbReference type="GO" id="GO:0017080">
    <property type="term" value="F:sodium channel regulator activity"/>
    <property type="evidence" value="ECO:0000318"/>
    <property type="project" value="GO_Central"/>
</dbReference>
<dbReference type="GO" id="GO:0044325">
    <property type="term" value="F:transmembrane transporter binding"/>
    <property type="evidence" value="ECO:0000318"/>
    <property type="project" value="GO_Central"/>
</dbReference>
<dbReference type="GO" id="GO:1905222">
    <property type="term" value="P:atrioventricular canal morphogenesis"/>
    <property type="evidence" value="ECO:0000315"/>
    <property type="project" value="ZFIN"/>
</dbReference>
<dbReference type="GO" id="GO:0060047">
    <property type="term" value="P:heart contraction"/>
    <property type="evidence" value="ECO:0000315"/>
    <property type="project" value="ZFIN"/>
</dbReference>
<dbReference type="GO" id="GO:0001947">
    <property type="term" value="P:heart looping"/>
    <property type="evidence" value="ECO:0000315"/>
    <property type="project" value="ZFIN"/>
</dbReference>
<dbReference type="GO" id="GO:0015031">
    <property type="term" value="P:protein transport"/>
    <property type="evidence" value="ECO:0007669"/>
    <property type="project" value="UniProtKB-KW"/>
</dbReference>
<dbReference type="GO" id="GO:1901207">
    <property type="term" value="P:regulation of heart looping"/>
    <property type="evidence" value="ECO:0000315"/>
    <property type="project" value="ZFIN"/>
</dbReference>
<dbReference type="GO" id="GO:2000826">
    <property type="term" value="P:regulation of heart morphogenesis"/>
    <property type="evidence" value="ECO:0000315"/>
    <property type="project" value="ZFIN"/>
</dbReference>
<dbReference type="GO" id="GO:1900825">
    <property type="term" value="P:regulation of membrane depolarization during cardiac muscle cell action potential"/>
    <property type="evidence" value="ECO:0000318"/>
    <property type="project" value="GO_Central"/>
</dbReference>
<dbReference type="FunFam" id="3.40.1000.10:FF:000004">
    <property type="entry name" value="Probable ran guanine nucleotide release factor"/>
    <property type="match status" value="1"/>
</dbReference>
<dbReference type="Gene3D" id="3.40.1000.10">
    <property type="entry name" value="Mog1/PsbP, alpha/beta/alpha sandwich"/>
    <property type="match status" value="1"/>
</dbReference>
<dbReference type="InterPro" id="IPR007681">
    <property type="entry name" value="Mog1"/>
</dbReference>
<dbReference type="InterPro" id="IPR016123">
    <property type="entry name" value="Mog1/PsbP_a/b/a-sand"/>
</dbReference>
<dbReference type="PANTHER" id="PTHR15837">
    <property type="entry name" value="RAN GUANINE NUCLEOTIDE RELEASE FACTOR"/>
    <property type="match status" value="1"/>
</dbReference>
<dbReference type="PANTHER" id="PTHR15837:SF0">
    <property type="entry name" value="RAN GUANINE NUCLEOTIDE RELEASE FACTOR"/>
    <property type="match status" value="1"/>
</dbReference>
<dbReference type="Pfam" id="PF04603">
    <property type="entry name" value="Mog1"/>
    <property type="match status" value="1"/>
</dbReference>
<dbReference type="SUPFAM" id="SSF55724">
    <property type="entry name" value="Mog1p/PsbP-like"/>
    <property type="match status" value="1"/>
</dbReference>
<evidence type="ECO:0000250" key="1">
    <source>
        <dbReference type="UniProtKB" id="Q9HD47"/>
    </source>
</evidence>
<evidence type="ECO:0000269" key="2">
    <source>
    </source>
</evidence>
<evidence type="ECO:0000303" key="3">
    <source>
    </source>
</evidence>
<evidence type="ECO:0000305" key="4"/>
<evidence type="ECO:0000312" key="5">
    <source>
        <dbReference type="EMBL" id="AAI50379.1"/>
    </source>
</evidence>
<evidence type="ECO:0000312" key="6">
    <source>
        <dbReference type="Proteomes" id="UP000000437"/>
    </source>
</evidence>
<evidence type="ECO:0000312" key="7">
    <source>
        <dbReference type="ZFIN" id="ZDB-GENE-060526-143"/>
    </source>
</evidence>
<name>MOG1_DANRE</name>
<reference key="1">
    <citation type="journal article" date="2013" name="Nature">
        <title>The zebrafish reference genome sequence and its relationship to the human genome.</title>
        <authorList>
            <person name="Howe K."/>
            <person name="Clark M.D."/>
            <person name="Torroja C.F."/>
            <person name="Torrance J."/>
            <person name="Berthelot C."/>
            <person name="Muffato M."/>
            <person name="Collins J.E."/>
            <person name="Humphray S."/>
            <person name="McLaren K."/>
            <person name="Matthews L."/>
            <person name="McLaren S."/>
            <person name="Sealy I."/>
            <person name="Caccamo M."/>
            <person name="Churcher C."/>
            <person name="Scott C."/>
            <person name="Barrett J.C."/>
            <person name="Koch R."/>
            <person name="Rauch G.J."/>
            <person name="White S."/>
            <person name="Chow W."/>
            <person name="Kilian B."/>
            <person name="Quintais L.T."/>
            <person name="Guerra-Assuncao J.A."/>
            <person name="Zhou Y."/>
            <person name="Gu Y."/>
            <person name="Yen J."/>
            <person name="Vogel J.H."/>
            <person name="Eyre T."/>
            <person name="Redmond S."/>
            <person name="Banerjee R."/>
            <person name="Chi J."/>
            <person name="Fu B."/>
            <person name="Langley E."/>
            <person name="Maguire S.F."/>
            <person name="Laird G.K."/>
            <person name="Lloyd D."/>
            <person name="Kenyon E."/>
            <person name="Donaldson S."/>
            <person name="Sehra H."/>
            <person name="Almeida-King J."/>
            <person name="Loveland J."/>
            <person name="Trevanion S."/>
            <person name="Jones M."/>
            <person name="Quail M."/>
            <person name="Willey D."/>
            <person name="Hunt A."/>
            <person name="Burton J."/>
            <person name="Sims S."/>
            <person name="McLay K."/>
            <person name="Plumb B."/>
            <person name="Davis J."/>
            <person name="Clee C."/>
            <person name="Oliver K."/>
            <person name="Clark R."/>
            <person name="Riddle C."/>
            <person name="Elliot D."/>
            <person name="Threadgold G."/>
            <person name="Harden G."/>
            <person name="Ware D."/>
            <person name="Begum S."/>
            <person name="Mortimore B."/>
            <person name="Kerry G."/>
            <person name="Heath P."/>
            <person name="Phillimore B."/>
            <person name="Tracey A."/>
            <person name="Corby N."/>
            <person name="Dunn M."/>
            <person name="Johnson C."/>
            <person name="Wood J."/>
            <person name="Clark S."/>
            <person name="Pelan S."/>
            <person name="Griffiths G."/>
            <person name="Smith M."/>
            <person name="Glithero R."/>
            <person name="Howden P."/>
            <person name="Barker N."/>
            <person name="Lloyd C."/>
            <person name="Stevens C."/>
            <person name="Harley J."/>
            <person name="Holt K."/>
            <person name="Panagiotidis G."/>
            <person name="Lovell J."/>
            <person name="Beasley H."/>
            <person name="Henderson C."/>
            <person name="Gordon D."/>
            <person name="Auger K."/>
            <person name="Wright D."/>
            <person name="Collins J."/>
            <person name="Raisen C."/>
            <person name="Dyer L."/>
            <person name="Leung K."/>
            <person name="Robertson L."/>
            <person name="Ambridge K."/>
            <person name="Leongamornlert D."/>
            <person name="McGuire S."/>
            <person name="Gilderthorp R."/>
            <person name="Griffiths C."/>
            <person name="Manthravadi D."/>
            <person name="Nichol S."/>
            <person name="Barker G."/>
            <person name="Whitehead S."/>
            <person name="Kay M."/>
            <person name="Brown J."/>
            <person name="Murnane C."/>
            <person name="Gray E."/>
            <person name="Humphries M."/>
            <person name="Sycamore N."/>
            <person name="Barker D."/>
            <person name="Saunders D."/>
            <person name="Wallis J."/>
            <person name="Babbage A."/>
            <person name="Hammond S."/>
            <person name="Mashreghi-Mohammadi M."/>
            <person name="Barr L."/>
            <person name="Martin S."/>
            <person name="Wray P."/>
            <person name="Ellington A."/>
            <person name="Matthews N."/>
            <person name="Ellwood M."/>
            <person name="Woodmansey R."/>
            <person name="Clark G."/>
            <person name="Cooper J."/>
            <person name="Tromans A."/>
            <person name="Grafham D."/>
            <person name="Skuce C."/>
            <person name="Pandian R."/>
            <person name="Andrews R."/>
            <person name="Harrison E."/>
            <person name="Kimberley A."/>
            <person name="Garnett J."/>
            <person name="Fosker N."/>
            <person name="Hall R."/>
            <person name="Garner P."/>
            <person name="Kelly D."/>
            <person name="Bird C."/>
            <person name="Palmer S."/>
            <person name="Gehring I."/>
            <person name="Berger A."/>
            <person name="Dooley C.M."/>
            <person name="Ersan-Urun Z."/>
            <person name="Eser C."/>
            <person name="Geiger H."/>
            <person name="Geisler M."/>
            <person name="Karotki L."/>
            <person name="Kirn A."/>
            <person name="Konantz J."/>
            <person name="Konantz M."/>
            <person name="Oberlander M."/>
            <person name="Rudolph-Geiger S."/>
            <person name="Teucke M."/>
            <person name="Lanz C."/>
            <person name="Raddatz G."/>
            <person name="Osoegawa K."/>
            <person name="Zhu B."/>
            <person name="Rapp A."/>
            <person name="Widaa S."/>
            <person name="Langford C."/>
            <person name="Yang F."/>
            <person name="Schuster S.C."/>
            <person name="Carter N.P."/>
            <person name="Harrow J."/>
            <person name="Ning Z."/>
            <person name="Herrero J."/>
            <person name="Searle S.M."/>
            <person name="Enright A."/>
            <person name="Geisler R."/>
            <person name="Plasterk R.H."/>
            <person name="Lee C."/>
            <person name="Westerfield M."/>
            <person name="de Jong P.J."/>
            <person name="Zon L.I."/>
            <person name="Postlethwait J.H."/>
            <person name="Nusslein-Volhard C."/>
            <person name="Hubbard T.J."/>
            <person name="Roest Crollius H."/>
            <person name="Rogers J."/>
            <person name="Stemple D.L."/>
        </authorList>
    </citation>
    <scope>NUCLEOTIDE SEQUENCE [LARGE SCALE GENOMIC DNA]</scope>
    <source>
        <strain>Tuebingen</strain>
    </source>
</reference>
<reference evidence="5" key="2">
    <citation type="submission" date="2007-07" db="EMBL/GenBank/DDBJ databases">
        <authorList>
            <consortium name="NIH - Zebrafish Gene Collection (ZGC) project"/>
        </authorList>
    </citation>
    <scope>NUCLEOTIDE SEQUENCE [LARGE SCALE MRNA]</scope>
    <source>
        <tissue evidence="5">Skin</tissue>
    </source>
</reference>
<reference key="3">
    <citation type="journal article" date="2016" name="Sci. Rep.">
        <title>Cardiac sodium channel regulator MOG1 regulates cardiac morphogenesis and rhythm.</title>
        <authorList>
            <person name="Zhou J."/>
            <person name="Wang L."/>
            <person name="Zuo M."/>
            <person name="Wang X."/>
            <person name="Ahmed A.S."/>
            <person name="Chen Q."/>
            <person name="Wang Q.K."/>
        </authorList>
    </citation>
    <scope>FUNCTION</scope>
    <scope>DISRUPTION PHENOTYPE</scope>
    <scope>DEVELOPMENTAL STAGE</scope>
</reference>
<comment type="function">
    <text evidence="1 2">May regulate the intracellular trafficking of RAN. Promotes guanine nucleotide release from RAN and inhibits binding of new GTP. Plays a role in the regulation of the levels of GTP-bound RAN in the nucleus (By similarity). Required for normal expression of the ion channel hcn4 and for normal expression of the cardiac transcription factors nkx2.5, gata4 and hand2 during embryonic development. Required for normal embryonic heart development and normal heart rate (PubMed:26903377).</text>
</comment>
<comment type="subunit">
    <text evidence="1">Monomer. Interacts with ran (By similarity).</text>
</comment>
<comment type="subcellular location">
    <subcellularLocation>
        <location evidence="1">Nucleus</location>
    </subcellularLocation>
    <subcellularLocation>
        <location evidence="1">Cytoplasm</location>
        <location evidence="1">Perinuclear region</location>
    </subcellularLocation>
    <subcellularLocation>
        <location evidence="1">Cytoplasm</location>
    </subcellularLocation>
    <subcellularLocation>
        <location evidence="1">Cell membrane</location>
        <topology evidence="1">Peripheral membrane protein</topology>
        <orientation evidence="1">Cytoplasmic side</orientation>
    </subcellularLocation>
    <text evidence="1">May shuttle between the nucleus and cytoplasm.</text>
</comment>
<comment type="developmental stage">
    <text evidence="2">Detected in one-cell-stage embryos, suggesting maternal expression. Detected in blastomeres at 2.5 to 4 hpf. Ubiquitous in embryos from 6 to 12 hpf. At 24 hpf, expression is ubiquitous, with higher levels of expression in the region of the brain and eyes. At 48 hpf, predominantly expressed in the brain area, but also detected in heart and fins.</text>
</comment>
<comment type="disruption phenotype">
    <text evidence="2">Morpholino knockdown of the protein causes bradycardia and weakened myocardial contraction. Expression of hcn4 is decreased, and this may be the cause for the decreased heart rate. Morpholino knockdown causes defects in heart looping during embryonic heart development, probably due to the decreased expression of cardiac transcription factors in the anterior lateral mesoderm.</text>
</comment>
<comment type="similarity">
    <text evidence="4">Belongs to the MOG1 family.</text>
</comment>
<organism evidence="6">
    <name type="scientific">Danio rerio</name>
    <name type="common">Zebrafish</name>
    <name type="synonym">Brachydanio rerio</name>
    <dbReference type="NCBI Taxonomy" id="7955"/>
    <lineage>
        <taxon>Eukaryota</taxon>
        <taxon>Metazoa</taxon>
        <taxon>Chordata</taxon>
        <taxon>Craniata</taxon>
        <taxon>Vertebrata</taxon>
        <taxon>Euteleostomi</taxon>
        <taxon>Actinopterygii</taxon>
        <taxon>Neopterygii</taxon>
        <taxon>Teleostei</taxon>
        <taxon>Ostariophysi</taxon>
        <taxon>Cypriniformes</taxon>
        <taxon>Danionidae</taxon>
        <taxon>Danioninae</taxon>
        <taxon>Danio</taxon>
    </lineage>
</organism>
<gene>
    <name evidence="7" type="primary">rangrf</name>
    <name evidence="3" type="synonym">mog1</name>
</gene>
<feature type="chain" id="PRO_0000442921" description="Ran guanine nucleotide release factor">
    <location>
        <begin position="1"/>
        <end position="183"/>
    </location>
</feature>
<feature type="region of interest" description="Interaction with RAN" evidence="1">
    <location>
        <begin position="23"/>
        <end position="66"/>
    </location>
</feature>
<feature type="sequence conflict" description="In Ref. 2; AAI50379." evidence="4" ref="2">
    <original>Q</original>
    <variation>R</variation>
    <location>
        <position position="168"/>
    </location>
</feature>
<protein>
    <recommendedName>
        <fullName>Ran guanine nucleotide release factor</fullName>
        <shortName>RanGNRF</shortName>
    </recommendedName>
    <alternativeName>
        <fullName>Ran-binding protein MOG1</fullName>
    </alternativeName>
</protein>
<accession>A3KPP3</accession>
<accession>A7E2J7</accession>
<sequence length="183" mass="20301">MSRPLFGGALSAVFPSSVMDISELRQIPDNQEVFAHSQTDQSIIIELLEYQSQVQDADAARYHFEDVAGSNKAIENGTWEVRVVEQVPQSEISMQECSSAWLLSGAQLVSKFNEEAKNTVNVHQCLFRLPQFTTDILMTFNDPVFINPLSSSAAGNMEAIPWTLQDFQGVLQSLRLLDSGVFG</sequence>
<proteinExistence type="evidence at transcript level"/>